<organism>
    <name type="scientific">Frankia casuarinae (strain DSM 45818 / CECT 9043 / HFP020203 / CcI3)</name>
    <dbReference type="NCBI Taxonomy" id="106370"/>
    <lineage>
        <taxon>Bacteria</taxon>
        <taxon>Bacillati</taxon>
        <taxon>Actinomycetota</taxon>
        <taxon>Actinomycetes</taxon>
        <taxon>Frankiales</taxon>
        <taxon>Frankiaceae</taxon>
        <taxon>Frankia</taxon>
    </lineage>
</organism>
<accession>Q2J766</accession>
<name>RNY_FRACC</name>
<keyword id="KW-1003">Cell membrane</keyword>
<keyword id="KW-0255">Endonuclease</keyword>
<keyword id="KW-0378">Hydrolase</keyword>
<keyword id="KW-0472">Membrane</keyword>
<keyword id="KW-0540">Nuclease</keyword>
<keyword id="KW-1185">Reference proteome</keyword>
<keyword id="KW-0694">RNA-binding</keyword>
<keyword id="KW-0812">Transmembrane</keyword>
<keyword id="KW-1133">Transmembrane helix</keyword>
<reference key="1">
    <citation type="journal article" date="2007" name="Genome Res.">
        <title>Genome characteristics of facultatively symbiotic Frankia sp. strains reflect host range and host plant biogeography.</title>
        <authorList>
            <person name="Normand P."/>
            <person name="Lapierre P."/>
            <person name="Tisa L.S."/>
            <person name="Gogarten J.P."/>
            <person name="Alloisio N."/>
            <person name="Bagnarol E."/>
            <person name="Bassi C.A."/>
            <person name="Berry A.M."/>
            <person name="Bickhart D.M."/>
            <person name="Choisne N."/>
            <person name="Couloux A."/>
            <person name="Cournoyer B."/>
            <person name="Cruveiller S."/>
            <person name="Daubin V."/>
            <person name="Demange N."/>
            <person name="Francino M.P."/>
            <person name="Goltsman E."/>
            <person name="Huang Y."/>
            <person name="Kopp O.R."/>
            <person name="Labarre L."/>
            <person name="Lapidus A."/>
            <person name="Lavire C."/>
            <person name="Marechal J."/>
            <person name="Martinez M."/>
            <person name="Mastronunzio J.E."/>
            <person name="Mullin B.C."/>
            <person name="Niemann J."/>
            <person name="Pujic P."/>
            <person name="Rawnsley T."/>
            <person name="Rouy Z."/>
            <person name="Schenowitz C."/>
            <person name="Sellstedt A."/>
            <person name="Tavares F."/>
            <person name="Tomkins J.P."/>
            <person name="Vallenet D."/>
            <person name="Valverde C."/>
            <person name="Wall L.G."/>
            <person name="Wang Y."/>
            <person name="Medigue C."/>
            <person name="Benson D.R."/>
        </authorList>
    </citation>
    <scope>NUCLEOTIDE SEQUENCE [LARGE SCALE GENOMIC DNA]</scope>
    <source>
        <strain>DSM 45818 / CECT 9043 / HFP020203 / CcI3</strain>
    </source>
</reference>
<comment type="function">
    <text evidence="1">Endoribonuclease that initiates mRNA decay.</text>
</comment>
<comment type="subcellular location">
    <subcellularLocation>
        <location evidence="1">Cell membrane</location>
        <topology evidence="1">Single-pass membrane protein</topology>
    </subcellularLocation>
</comment>
<comment type="similarity">
    <text evidence="1">Belongs to the RNase Y family.</text>
</comment>
<feature type="chain" id="PRO_0000344877" description="Ribonuclease Y">
    <location>
        <begin position="1"/>
        <end position="646"/>
    </location>
</feature>
<feature type="transmembrane region" description="Helical" evidence="1">
    <location>
        <begin position="4"/>
        <end position="24"/>
    </location>
</feature>
<feature type="domain" description="KH" evidence="1">
    <location>
        <begin position="336"/>
        <end position="402"/>
    </location>
</feature>
<feature type="domain" description="HD" evidence="2">
    <location>
        <begin position="462"/>
        <end position="555"/>
    </location>
</feature>
<feature type="region of interest" description="Disordered" evidence="3">
    <location>
        <begin position="43"/>
        <end position="62"/>
    </location>
</feature>
<feature type="region of interest" description="Disordered" evidence="3">
    <location>
        <begin position="69"/>
        <end position="118"/>
    </location>
</feature>
<proteinExistence type="inferred from homology"/>
<dbReference type="EC" id="3.1.-.-" evidence="1"/>
<dbReference type="EMBL" id="CP000249">
    <property type="protein sequence ID" value="ABD12876.1"/>
    <property type="molecule type" value="Genomic_DNA"/>
</dbReference>
<dbReference type="RefSeq" id="WP_011437901.1">
    <property type="nucleotide sequence ID" value="NZ_LRTJ01000037.1"/>
</dbReference>
<dbReference type="SMR" id="Q2J766"/>
<dbReference type="STRING" id="106370.Francci3_3523"/>
<dbReference type="KEGG" id="fra:Francci3_3523"/>
<dbReference type="eggNOG" id="COG1418">
    <property type="taxonomic scope" value="Bacteria"/>
</dbReference>
<dbReference type="HOGENOM" id="CLU_028328_1_0_11"/>
<dbReference type="OrthoDB" id="9803205at2"/>
<dbReference type="PhylomeDB" id="Q2J766"/>
<dbReference type="Proteomes" id="UP000001937">
    <property type="component" value="Chromosome"/>
</dbReference>
<dbReference type="GO" id="GO:0005886">
    <property type="term" value="C:plasma membrane"/>
    <property type="evidence" value="ECO:0007669"/>
    <property type="project" value="UniProtKB-SubCell"/>
</dbReference>
<dbReference type="GO" id="GO:0003723">
    <property type="term" value="F:RNA binding"/>
    <property type="evidence" value="ECO:0007669"/>
    <property type="project" value="UniProtKB-UniRule"/>
</dbReference>
<dbReference type="GO" id="GO:0004521">
    <property type="term" value="F:RNA endonuclease activity"/>
    <property type="evidence" value="ECO:0007669"/>
    <property type="project" value="UniProtKB-UniRule"/>
</dbReference>
<dbReference type="GO" id="GO:0006402">
    <property type="term" value="P:mRNA catabolic process"/>
    <property type="evidence" value="ECO:0007669"/>
    <property type="project" value="UniProtKB-UniRule"/>
</dbReference>
<dbReference type="CDD" id="cd00077">
    <property type="entry name" value="HDc"/>
    <property type="match status" value="1"/>
</dbReference>
<dbReference type="CDD" id="cd22431">
    <property type="entry name" value="KH-I_RNaseY"/>
    <property type="match status" value="1"/>
</dbReference>
<dbReference type="Gene3D" id="1.10.3210.10">
    <property type="entry name" value="Hypothetical protein af1432"/>
    <property type="match status" value="1"/>
</dbReference>
<dbReference type="HAMAP" id="MF_00335">
    <property type="entry name" value="RNase_Y"/>
    <property type="match status" value="1"/>
</dbReference>
<dbReference type="InterPro" id="IPR003607">
    <property type="entry name" value="HD/PDEase_dom"/>
</dbReference>
<dbReference type="InterPro" id="IPR006674">
    <property type="entry name" value="HD_domain"/>
</dbReference>
<dbReference type="InterPro" id="IPR006675">
    <property type="entry name" value="HDIG_dom"/>
</dbReference>
<dbReference type="InterPro" id="IPR004087">
    <property type="entry name" value="KH_dom"/>
</dbReference>
<dbReference type="InterPro" id="IPR004088">
    <property type="entry name" value="KH_dom_type_1"/>
</dbReference>
<dbReference type="InterPro" id="IPR036612">
    <property type="entry name" value="KH_dom_type_1_sf"/>
</dbReference>
<dbReference type="InterPro" id="IPR017705">
    <property type="entry name" value="Ribonuclease_Y"/>
</dbReference>
<dbReference type="InterPro" id="IPR022711">
    <property type="entry name" value="RNase_Y_N"/>
</dbReference>
<dbReference type="NCBIfam" id="TIGR00277">
    <property type="entry name" value="HDIG"/>
    <property type="match status" value="1"/>
</dbReference>
<dbReference type="NCBIfam" id="TIGR03319">
    <property type="entry name" value="RNase_Y"/>
    <property type="match status" value="1"/>
</dbReference>
<dbReference type="PANTHER" id="PTHR12826">
    <property type="entry name" value="RIBONUCLEASE Y"/>
    <property type="match status" value="1"/>
</dbReference>
<dbReference type="PANTHER" id="PTHR12826:SF15">
    <property type="entry name" value="RIBONUCLEASE Y"/>
    <property type="match status" value="1"/>
</dbReference>
<dbReference type="Pfam" id="PF01966">
    <property type="entry name" value="HD"/>
    <property type="match status" value="1"/>
</dbReference>
<dbReference type="Pfam" id="PF00013">
    <property type="entry name" value="KH_1"/>
    <property type="match status" value="1"/>
</dbReference>
<dbReference type="Pfam" id="PF12072">
    <property type="entry name" value="RNase_Y_N"/>
    <property type="match status" value="1"/>
</dbReference>
<dbReference type="SMART" id="SM00471">
    <property type="entry name" value="HDc"/>
    <property type="match status" value="1"/>
</dbReference>
<dbReference type="SMART" id="SM00322">
    <property type="entry name" value="KH"/>
    <property type="match status" value="1"/>
</dbReference>
<dbReference type="SUPFAM" id="SSF54791">
    <property type="entry name" value="Eukaryotic type KH-domain (KH-domain type I)"/>
    <property type="match status" value="1"/>
</dbReference>
<dbReference type="SUPFAM" id="SSF109604">
    <property type="entry name" value="HD-domain/PDEase-like"/>
    <property type="match status" value="1"/>
</dbReference>
<dbReference type="PROSITE" id="PS51831">
    <property type="entry name" value="HD"/>
    <property type="match status" value="1"/>
</dbReference>
<dbReference type="PROSITE" id="PS50084">
    <property type="entry name" value="KH_TYPE_1"/>
    <property type="match status" value="1"/>
</dbReference>
<gene>
    <name evidence="1" type="primary">rny</name>
    <name type="ordered locus">Francci3_3523</name>
</gene>
<protein>
    <recommendedName>
        <fullName evidence="1">Ribonuclease Y</fullName>
        <shortName evidence="1">RNase Y</shortName>
        <ecNumber evidence="1">3.1.-.-</ecNumber>
    </recommendedName>
</protein>
<sequence length="646" mass="70338">MEGVLVVLLSLVLVVLSVLILAVARLVRATRVDKVPDPAPVVPRTPAARGVGDVTGPADFDEEPTVRVLPAPWEGSGAPATTDADSPADRDGTAARTGDSAVTAGRSDGGLRAAHGGSAEEAAQIVARAEREAAERLARAERDAAEIRRRGEEDVALLRERMLAEAAVETSRVQAAARESVRAEQEAARTEIAATRAAFDGEQQAWRTELQSREVAIAAREQRVEDRMASLDDHGRRLADRDRDLLDRENDLTRRTAEVADLERARHAALEQVAGLTAGQARGELIAVIEQEARREAALTVREIEARAEEEGEERARRIVTTAIQRVASDQTTESVVTVLHLPGDEMKGRIIGREGRNIRAFESVTGVNVLIDDTPEAVLLSCFDPVRREVGRITLAALVSDGRIHPHRIEEEYARAQLEVAERCVRAGEDALLETGISEMHPELVNLLGQLRYRTSYGQNVLAHLIESAHLAGIMAAELRMPLPLAKRAALLHDLGKALTHEIEGSHALIGADVARRYGEDEQVVHAIEAHHNEVAPRSICAVLTQAADQISGGRPGARRDSLESYVKRLERIEQIAGDRPGVDKVFAMQAGREVRVMVVPEEIDDLAAHLLARDVARQIEEELTYPGQIRVTVVRETRAVGTAR</sequence>
<evidence type="ECO:0000255" key="1">
    <source>
        <dbReference type="HAMAP-Rule" id="MF_00335"/>
    </source>
</evidence>
<evidence type="ECO:0000255" key="2">
    <source>
        <dbReference type="PROSITE-ProRule" id="PRU01175"/>
    </source>
</evidence>
<evidence type="ECO:0000256" key="3">
    <source>
        <dbReference type="SAM" id="MobiDB-lite"/>
    </source>
</evidence>